<sequence>MTTILTYPFKNLPTASKWALRFSIRPLSCSSQLRAAPAVQTKTKKTLAKPNIRNVVVVDGVRTPFLLSGTSYKDLMPHDLARAALTGLLHRTSVPKEVVDYIIFGTVIQEVKTSNVAREAALGAGFSDKTPAHTVTMACISANQAMTTGVGLIASGQCDVIVAGGVELMSDVPIRHSRKMRKLMLDLNKAKSMGQRLSLISKFRFNFLAPELPAVSEFSTSETMGHSADRLAAAFAVSRLEQDEYALRSHSLAKKAQDEGLLSDVVPFKVPGKDTVTKDNGIRPSSLEQMAKLKPAFIKPYGTVTAANSSFLTDGASAMLIMAEEKALAMGYKPKAYLRDFMYVSQDPKDQLLLGPTYATPKVLEKAGLTMNDIDAFEFHEAFSGQILANFKAMDSDWFAENYMGRKTKVGLPPLEKFNNWGGSLSLGHPFGATGCRLVMAAANRLRKEGGQYGLVAACAAGGQGHAMIVEAYPK</sequence>
<dbReference type="EC" id="2.3.1.155" evidence="1"/>
<dbReference type="EC" id="2.3.1.16" evidence="1"/>
<dbReference type="EMBL" id="AB188280">
    <property type="protein sequence ID" value="BAD74031.1"/>
    <property type="molecule type" value="mRNA"/>
</dbReference>
<dbReference type="RefSeq" id="NP_001029291.1">
    <property type="nucleotide sequence ID" value="NM_001034119.1"/>
</dbReference>
<dbReference type="RefSeq" id="XP_009440359.1">
    <property type="nucleotide sequence ID" value="XM_009442084.4"/>
</dbReference>
<dbReference type="SMR" id="Q5R1W7"/>
<dbReference type="FunCoup" id="Q5R1W7">
    <property type="interactions" value="2256"/>
</dbReference>
<dbReference type="STRING" id="9598.ENSPTRP00000020160"/>
<dbReference type="PaxDb" id="9598-ENSPTRP00000020160"/>
<dbReference type="Ensembl" id="ENSPTRT00000021854.4">
    <property type="protein sequence ID" value="ENSPTRP00000020160.3"/>
    <property type="gene ID" value="ENSPTRG00000011733.6"/>
</dbReference>
<dbReference type="GeneID" id="459080"/>
<dbReference type="KEGG" id="ptr:459080"/>
<dbReference type="CTD" id="3032"/>
<dbReference type="VGNC" id="VGNC:48985">
    <property type="gene designation" value="HADHB"/>
</dbReference>
<dbReference type="eggNOG" id="KOG1392">
    <property type="taxonomic scope" value="Eukaryota"/>
</dbReference>
<dbReference type="GeneTree" id="ENSGT01030000234626"/>
<dbReference type="HOGENOM" id="CLU_031026_2_0_1"/>
<dbReference type="InParanoid" id="Q5R1W7"/>
<dbReference type="OrthoDB" id="3390at9604"/>
<dbReference type="TreeFam" id="TF315243"/>
<dbReference type="UniPathway" id="UPA00659"/>
<dbReference type="Proteomes" id="UP000002277">
    <property type="component" value="Chromosome 2A"/>
</dbReference>
<dbReference type="Bgee" id="ENSPTRG00000011733">
    <property type="expression patterns" value="Expressed in heart and 21 other cell types or tissues"/>
</dbReference>
<dbReference type="GO" id="GO:0005783">
    <property type="term" value="C:endoplasmic reticulum"/>
    <property type="evidence" value="ECO:0000250"/>
    <property type="project" value="UniProtKB"/>
</dbReference>
<dbReference type="GO" id="GO:0016507">
    <property type="term" value="C:mitochondrial fatty acid beta-oxidation multienzyme complex"/>
    <property type="evidence" value="ECO:0000318"/>
    <property type="project" value="GO_Central"/>
</dbReference>
<dbReference type="GO" id="GO:0005743">
    <property type="term" value="C:mitochondrial inner membrane"/>
    <property type="evidence" value="ECO:0000250"/>
    <property type="project" value="UniProtKB"/>
</dbReference>
<dbReference type="GO" id="GO:0042645">
    <property type="term" value="C:mitochondrial nucleoid"/>
    <property type="evidence" value="ECO:0007669"/>
    <property type="project" value="Ensembl"/>
</dbReference>
<dbReference type="GO" id="GO:0005741">
    <property type="term" value="C:mitochondrial outer membrane"/>
    <property type="evidence" value="ECO:0000250"/>
    <property type="project" value="UniProtKB"/>
</dbReference>
<dbReference type="GO" id="GO:0005654">
    <property type="term" value="C:nucleoplasm"/>
    <property type="evidence" value="ECO:0007669"/>
    <property type="project" value="Ensembl"/>
</dbReference>
<dbReference type="GO" id="GO:0003985">
    <property type="term" value="F:acetyl-CoA C-acetyltransferase activity"/>
    <property type="evidence" value="ECO:0000318"/>
    <property type="project" value="GO_Central"/>
</dbReference>
<dbReference type="GO" id="GO:0050633">
    <property type="term" value="F:acetyl-CoA C-myristoyltransferase activity"/>
    <property type="evidence" value="ECO:0007669"/>
    <property type="project" value="UniProtKB-EC"/>
</dbReference>
<dbReference type="GO" id="GO:0006635">
    <property type="term" value="P:fatty acid beta-oxidation"/>
    <property type="evidence" value="ECO:0000318"/>
    <property type="project" value="GO_Central"/>
</dbReference>
<dbReference type="CDD" id="cd00751">
    <property type="entry name" value="thiolase"/>
    <property type="match status" value="1"/>
</dbReference>
<dbReference type="FunFam" id="3.40.47.10:FF:000020">
    <property type="entry name" value="Putative trifunctional enzyme subunit beta mitochondrial"/>
    <property type="match status" value="1"/>
</dbReference>
<dbReference type="Gene3D" id="3.40.47.10">
    <property type="match status" value="1"/>
</dbReference>
<dbReference type="InterPro" id="IPR002155">
    <property type="entry name" value="Thiolase"/>
</dbReference>
<dbReference type="InterPro" id="IPR016039">
    <property type="entry name" value="Thiolase-like"/>
</dbReference>
<dbReference type="InterPro" id="IPR020615">
    <property type="entry name" value="Thiolase_acyl_enz_int_AS"/>
</dbReference>
<dbReference type="InterPro" id="IPR020610">
    <property type="entry name" value="Thiolase_AS"/>
</dbReference>
<dbReference type="InterPro" id="IPR020617">
    <property type="entry name" value="Thiolase_C"/>
</dbReference>
<dbReference type="InterPro" id="IPR020613">
    <property type="entry name" value="Thiolase_CS"/>
</dbReference>
<dbReference type="InterPro" id="IPR020616">
    <property type="entry name" value="Thiolase_N"/>
</dbReference>
<dbReference type="NCBIfam" id="TIGR01930">
    <property type="entry name" value="AcCoA-C-Actrans"/>
    <property type="match status" value="1"/>
</dbReference>
<dbReference type="PANTHER" id="PTHR18919">
    <property type="entry name" value="ACETYL-COA C-ACYLTRANSFERASE"/>
    <property type="match status" value="1"/>
</dbReference>
<dbReference type="PANTHER" id="PTHR18919:SF153">
    <property type="entry name" value="TRIFUNCTIONAL ENZYME SUBUNIT BETA, MITOCHONDRIAL"/>
    <property type="match status" value="1"/>
</dbReference>
<dbReference type="Pfam" id="PF02803">
    <property type="entry name" value="Thiolase_C"/>
    <property type="match status" value="1"/>
</dbReference>
<dbReference type="Pfam" id="PF00108">
    <property type="entry name" value="Thiolase_N"/>
    <property type="match status" value="1"/>
</dbReference>
<dbReference type="SUPFAM" id="SSF53901">
    <property type="entry name" value="Thiolase-like"/>
    <property type="match status" value="2"/>
</dbReference>
<dbReference type="PROSITE" id="PS00098">
    <property type="entry name" value="THIOLASE_1"/>
    <property type="match status" value="1"/>
</dbReference>
<dbReference type="PROSITE" id="PS00737">
    <property type="entry name" value="THIOLASE_2"/>
    <property type="match status" value="1"/>
</dbReference>
<dbReference type="PROSITE" id="PS00099">
    <property type="entry name" value="THIOLASE_3"/>
    <property type="match status" value="1"/>
</dbReference>
<comment type="function">
    <text evidence="1">Mitochondrial trifunctional enzyme catalyzes the last three of the four reactions of the mitochondrial beta-oxidation pathway. The mitochondrial beta-oxidation pathway is the major energy-producing process in tissues and is performed through four consecutive reactions breaking down fatty acids into acetyl-CoA. Among the enzymes involved in this pathway, the trifunctional enzyme exhibits specificity for long-chain fatty acids. Mitochondrial trifunctional enzyme is a heterotetrameric complex composed of two proteins, the trifunctional enzyme subunit alpha/HADHA carries the 2,3-enoyl-CoA hydratase and the 3-hydroxyacyl-CoA dehydrogenase activities, while the trifunctional enzyme subunit beta/HADHB described here bears the 3-ketoacyl-CoA thiolase activity.</text>
</comment>
<comment type="catalytic activity">
    <reaction evidence="1">
        <text>an acyl-CoA + acetyl-CoA = a 3-oxoacyl-CoA + CoA</text>
        <dbReference type="Rhea" id="RHEA:21564"/>
        <dbReference type="ChEBI" id="CHEBI:57287"/>
        <dbReference type="ChEBI" id="CHEBI:57288"/>
        <dbReference type="ChEBI" id="CHEBI:58342"/>
        <dbReference type="ChEBI" id="CHEBI:90726"/>
        <dbReference type="EC" id="2.3.1.16"/>
    </reaction>
    <physiologicalReaction direction="right-to-left" evidence="1">
        <dbReference type="Rhea" id="RHEA:21566"/>
    </physiologicalReaction>
</comment>
<comment type="catalytic activity">
    <reaction evidence="1">
        <text>butanoyl-CoA + acetyl-CoA = 3-oxohexanoyl-CoA + CoA</text>
        <dbReference type="Rhea" id="RHEA:31111"/>
        <dbReference type="ChEBI" id="CHEBI:57287"/>
        <dbReference type="ChEBI" id="CHEBI:57288"/>
        <dbReference type="ChEBI" id="CHEBI:57371"/>
        <dbReference type="ChEBI" id="CHEBI:62418"/>
    </reaction>
    <physiologicalReaction direction="right-to-left" evidence="1">
        <dbReference type="Rhea" id="RHEA:31113"/>
    </physiologicalReaction>
</comment>
<comment type="catalytic activity">
    <reaction evidence="1">
        <text>hexanoyl-CoA + acetyl-CoA = 3-oxooctanoyl-CoA + CoA</text>
        <dbReference type="Rhea" id="RHEA:31203"/>
        <dbReference type="ChEBI" id="CHEBI:57287"/>
        <dbReference type="ChEBI" id="CHEBI:57288"/>
        <dbReference type="ChEBI" id="CHEBI:62619"/>
        <dbReference type="ChEBI" id="CHEBI:62620"/>
    </reaction>
    <physiologicalReaction direction="right-to-left" evidence="1">
        <dbReference type="Rhea" id="RHEA:31205"/>
    </physiologicalReaction>
</comment>
<comment type="catalytic activity">
    <reaction evidence="1">
        <text>octanoyl-CoA + acetyl-CoA = 3-oxodecanoyl-CoA + CoA</text>
        <dbReference type="Rhea" id="RHEA:31087"/>
        <dbReference type="ChEBI" id="CHEBI:57287"/>
        <dbReference type="ChEBI" id="CHEBI:57288"/>
        <dbReference type="ChEBI" id="CHEBI:57386"/>
        <dbReference type="ChEBI" id="CHEBI:62548"/>
    </reaction>
    <physiologicalReaction direction="right-to-left" evidence="1">
        <dbReference type="Rhea" id="RHEA:31089"/>
    </physiologicalReaction>
</comment>
<comment type="catalytic activity">
    <reaction evidence="1">
        <text>decanoyl-CoA + acetyl-CoA = 3-oxododecanoyl-CoA + CoA</text>
        <dbReference type="Rhea" id="RHEA:31183"/>
        <dbReference type="ChEBI" id="CHEBI:57287"/>
        <dbReference type="ChEBI" id="CHEBI:57288"/>
        <dbReference type="ChEBI" id="CHEBI:61430"/>
        <dbReference type="ChEBI" id="CHEBI:62615"/>
    </reaction>
    <physiologicalReaction direction="right-to-left" evidence="1">
        <dbReference type="Rhea" id="RHEA:31185"/>
    </physiologicalReaction>
</comment>
<comment type="catalytic activity">
    <reaction evidence="1">
        <text>dodecanoyl-CoA + acetyl-CoA = 3-oxotetradecanoyl-CoA + CoA</text>
        <dbReference type="Rhea" id="RHEA:31091"/>
        <dbReference type="ChEBI" id="CHEBI:57287"/>
        <dbReference type="ChEBI" id="CHEBI:57288"/>
        <dbReference type="ChEBI" id="CHEBI:57375"/>
        <dbReference type="ChEBI" id="CHEBI:62543"/>
    </reaction>
    <physiologicalReaction direction="right-to-left" evidence="1">
        <dbReference type="Rhea" id="RHEA:31093"/>
    </physiologicalReaction>
</comment>
<comment type="catalytic activity">
    <reaction evidence="1">
        <text>tetradecanoyl-CoA + acetyl-CoA = 3-oxohexadecanoyl-CoA + CoA</text>
        <dbReference type="Rhea" id="RHEA:18161"/>
        <dbReference type="ChEBI" id="CHEBI:57287"/>
        <dbReference type="ChEBI" id="CHEBI:57288"/>
        <dbReference type="ChEBI" id="CHEBI:57349"/>
        <dbReference type="ChEBI" id="CHEBI:57385"/>
        <dbReference type="EC" id="2.3.1.155"/>
    </reaction>
    <physiologicalReaction direction="right-to-left" evidence="1">
        <dbReference type="Rhea" id="RHEA:18163"/>
    </physiologicalReaction>
</comment>
<comment type="pathway">
    <text evidence="1">Lipid metabolism; fatty acid beta-oxidation.</text>
</comment>
<comment type="subunit">
    <text evidence="1 2">Heterotetramer of 2 alpha/HADHA and 2 beta/HADHB subunits; forms the mitochondrial trifunctional enzyme. Also purified as higher order heterooligomers including a 4 alpha/HADHA and 4 beta/HADHB heterooligomer which physiological significance remains unclear. The mitochondrial trifunctional enzyme interacts with MTLN. Interacts with RSAD2/viperin.</text>
</comment>
<comment type="subcellular location">
    <subcellularLocation>
        <location evidence="1">Mitochondrion</location>
    </subcellularLocation>
    <subcellularLocation>
        <location evidence="1">Mitochondrion inner membrane</location>
    </subcellularLocation>
    <subcellularLocation>
        <location evidence="1">Mitochondrion outer membrane</location>
    </subcellularLocation>
    <subcellularLocation>
        <location evidence="1">Endoplasmic reticulum</location>
    </subcellularLocation>
    <text evidence="1">Protein stability and association with membranes require HADHA.</text>
</comment>
<comment type="similarity">
    <text evidence="5">Belongs to the thiolase-like superfamily. Thiolase family.</text>
</comment>
<proteinExistence type="evidence at transcript level"/>
<gene>
    <name type="primary">HADHB</name>
</gene>
<evidence type="ECO:0000250" key="1">
    <source>
        <dbReference type="UniProtKB" id="P55084"/>
    </source>
</evidence>
<evidence type="ECO:0000250" key="2">
    <source>
        <dbReference type="UniProtKB" id="Q8BMS1"/>
    </source>
</evidence>
<evidence type="ECO:0000250" key="3">
    <source>
        <dbReference type="UniProtKB" id="Q99JY0"/>
    </source>
</evidence>
<evidence type="ECO:0000255" key="4"/>
<evidence type="ECO:0000305" key="5"/>
<accession>Q5R1W7</accession>
<organism>
    <name type="scientific">Pan troglodytes</name>
    <name type="common">Chimpanzee</name>
    <dbReference type="NCBI Taxonomy" id="9598"/>
    <lineage>
        <taxon>Eukaryota</taxon>
        <taxon>Metazoa</taxon>
        <taxon>Chordata</taxon>
        <taxon>Craniata</taxon>
        <taxon>Vertebrata</taxon>
        <taxon>Euteleostomi</taxon>
        <taxon>Mammalia</taxon>
        <taxon>Eutheria</taxon>
        <taxon>Euarchontoglires</taxon>
        <taxon>Primates</taxon>
        <taxon>Haplorrhini</taxon>
        <taxon>Catarrhini</taxon>
        <taxon>Hominidae</taxon>
        <taxon>Pan</taxon>
    </lineage>
</organism>
<keyword id="KW-0007">Acetylation</keyword>
<keyword id="KW-0012">Acyltransferase</keyword>
<keyword id="KW-0256">Endoplasmic reticulum</keyword>
<keyword id="KW-0276">Fatty acid metabolism</keyword>
<keyword id="KW-0443">Lipid metabolism</keyword>
<keyword id="KW-0472">Membrane</keyword>
<keyword id="KW-0496">Mitochondrion</keyword>
<keyword id="KW-0999">Mitochondrion inner membrane</keyword>
<keyword id="KW-1000">Mitochondrion outer membrane</keyword>
<keyword id="KW-1185">Reference proteome</keyword>
<keyword id="KW-0808">Transferase</keyword>
<keyword id="KW-0809">Transit peptide</keyword>
<name>ECHB_PANTR</name>
<protein>
    <recommendedName>
        <fullName>Trifunctional enzyme subunit beta, mitochondrial</fullName>
    </recommendedName>
    <alternativeName>
        <fullName>TP-beta</fullName>
    </alternativeName>
    <domain>
        <recommendedName>
            <fullName>3-ketoacyl-CoA thiolase</fullName>
            <ecNumber evidence="1">2.3.1.155</ecNumber>
            <ecNumber evidence="1">2.3.1.16</ecNumber>
        </recommendedName>
        <alternativeName>
            <fullName>Acetyl-CoA acyltransferase</fullName>
        </alternativeName>
        <alternativeName>
            <fullName>Beta-ketothiolase</fullName>
        </alternativeName>
    </domain>
</protein>
<feature type="transit peptide" description="Mitochondrion" evidence="4">
    <location>
        <begin position="1"/>
        <end position="34"/>
    </location>
</feature>
<feature type="chain" id="PRO_0000034083" description="Trifunctional enzyme subunit beta, mitochondrial">
    <location>
        <begin position="35"/>
        <end position="475"/>
    </location>
</feature>
<feature type="intramembrane region" evidence="1">
    <location>
        <begin position="174"/>
        <end position="221"/>
    </location>
</feature>
<feature type="active site" description="Acyl-thioester intermediate" evidence="1">
    <location>
        <position position="139"/>
    </location>
</feature>
<feature type="active site" description="Proton donor/acceptor" evidence="1">
    <location>
        <position position="459"/>
    </location>
</feature>
<feature type="site" description="Increases nucleophilicity of active site Cys" evidence="1">
    <location>
        <position position="429"/>
    </location>
</feature>
<feature type="modified residue" description="N6-acetyllysine; alternate" evidence="1">
    <location>
        <position position="73"/>
    </location>
</feature>
<feature type="modified residue" description="N6-succinyllysine; alternate" evidence="3">
    <location>
        <position position="73"/>
    </location>
</feature>
<feature type="modified residue" description="N6-acetyllysine; alternate" evidence="1">
    <location>
        <position position="189"/>
    </location>
</feature>
<feature type="modified residue" description="N6-succinyllysine; alternate" evidence="3">
    <location>
        <position position="189"/>
    </location>
</feature>
<feature type="modified residue" description="N6-succinyllysine" evidence="3">
    <location>
        <position position="191"/>
    </location>
</feature>
<feature type="modified residue" description="N6-succinyllysine" evidence="3">
    <location>
        <position position="273"/>
    </location>
</feature>
<feature type="modified residue" description="N6-succinyllysine" evidence="3">
    <location>
        <position position="292"/>
    </location>
</feature>
<feature type="modified residue" description="N6-acetyllysine; alternate" evidence="3">
    <location>
        <position position="294"/>
    </location>
</feature>
<feature type="modified residue" description="N6-succinyllysine; alternate" evidence="3">
    <location>
        <position position="294"/>
    </location>
</feature>
<feature type="modified residue" description="N6-acetyllysine" evidence="3">
    <location>
        <position position="299"/>
    </location>
</feature>
<feature type="modified residue" description="N6-acetyllysine; alternate" evidence="3">
    <location>
        <position position="333"/>
    </location>
</feature>
<feature type="modified residue" description="N6-succinyllysine; alternate" evidence="3">
    <location>
        <position position="333"/>
    </location>
</feature>
<feature type="modified residue" description="N6-acetyllysine" evidence="3">
    <location>
        <position position="349"/>
    </location>
</feature>
<feature type="modified residue" description="N6-acetyllysine" evidence="3">
    <location>
        <position position="362"/>
    </location>
</feature>
<reference key="1">
    <citation type="submission" date="2004-08" db="EMBL/GenBank/DDBJ databases">
        <authorList>
            <person name="Hirai M."/>
            <person name="Sakate R."/>
            <person name="Hida M."/>
            <person name="Sugano S."/>
            <person name="Hayasaka I."/>
            <person name="Suto Y."/>
            <person name="Osada N."/>
            <person name="Hashimoto K."/>
        </authorList>
    </citation>
    <scope>NUCLEOTIDE SEQUENCE [MRNA]</scope>
    <source>
        <tissue>Skin</tissue>
    </source>
</reference>